<keyword id="KW-0413">Isomerase</keyword>
<keyword id="KW-0663">Pyridoxal phosphate</keyword>
<keyword id="KW-1185">Reference proteome</keyword>
<proteinExistence type="inferred from homology"/>
<protein>
    <recommendedName>
        <fullName evidence="1">Alanine racemase</fullName>
        <ecNumber evidence="1">5.1.1.1</ecNumber>
    </recommendedName>
</protein>
<evidence type="ECO:0000255" key="1">
    <source>
        <dbReference type="HAMAP-Rule" id="MF_01201"/>
    </source>
</evidence>
<sequence length="379" mass="40234">MQSPEFLSASSRLTVDLTALADNWRAMNERSGKARAAAVLKADAYGLGVVHAAPALYAAGARDFFVASVEEGADLRPLVPDGRIYILAGMWPGNEELFFENDLVPIINSEEQLAVFMAALSERGDHPCVLHVDTGMNRLGLSPEEALALAHDPARPASFSPVLVMSHLACADDPGHPMNRYQLQRFREVTAAFEGVPASLANSGGVFLGADYHFDLTRPGIAVYGGEAVNGAVNPMKAVVTAEARIVQVRTVPSGGTASYGASVRFGRDSRIATVAIGYADGYHRSVSGGGVTLRQAMPSGAFGFLHGMKVPHVGRVTMDLSLFDVTDLPEAAVRAGDYIEVFGRNVVIDDVARAGGTIGYELLTSLGRRYHRTYVGGA</sequence>
<name>ALR_RHIME</name>
<accession>Q92R07</accession>
<comment type="function">
    <text evidence="1">Catalyzes the interconversion of L-alanine and D-alanine. May also act on other amino acids.</text>
</comment>
<comment type="catalytic activity">
    <reaction evidence="1">
        <text>L-alanine = D-alanine</text>
        <dbReference type="Rhea" id="RHEA:20249"/>
        <dbReference type="ChEBI" id="CHEBI:57416"/>
        <dbReference type="ChEBI" id="CHEBI:57972"/>
        <dbReference type="EC" id="5.1.1.1"/>
    </reaction>
</comment>
<comment type="cofactor">
    <cofactor evidence="1">
        <name>pyridoxal 5'-phosphate</name>
        <dbReference type="ChEBI" id="CHEBI:597326"/>
    </cofactor>
</comment>
<comment type="pathway">
    <text evidence="1">Amino-acid biosynthesis; D-alanine biosynthesis; D-alanine from L-alanine: step 1/1.</text>
</comment>
<comment type="similarity">
    <text evidence="1">Belongs to the alanine racemase family.</text>
</comment>
<organism>
    <name type="scientific">Rhizobium meliloti (strain 1021)</name>
    <name type="common">Ensifer meliloti</name>
    <name type="synonym">Sinorhizobium meliloti</name>
    <dbReference type="NCBI Taxonomy" id="266834"/>
    <lineage>
        <taxon>Bacteria</taxon>
        <taxon>Pseudomonadati</taxon>
        <taxon>Pseudomonadota</taxon>
        <taxon>Alphaproteobacteria</taxon>
        <taxon>Hyphomicrobiales</taxon>
        <taxon>Rhizobiaceae</taxon>
        <taxon>Sinorhizobium/Ensifer group</taxon>
        <taxon>Sinorhizobium</taxon>
    </lineage>
</organism>
<reference key="1">
    <citation type="journal article" date="2001" name="Proc. Natl. Acad. Sci. U.S.A.">
        <title>Analysis of the chromosome sequence of the legume symbiont Sinorhizobium meliloti strain 1021.</title>
        <authorList>
            <person name="Capela D."/>
            <person name="Barloy-Hubler F."/>
            <person name="Gouzy J."/>
            <person name="Bothe G."/>
            <person name="Ampe F."/>
            <person name="Batut J."/>
            <person name="Boistard P."/>
            <person name="Becker A."/>
            <person name="Boutry M."/>
            <person name="Cadieu E."/>
            <person name="Dreano S."/>
            <person name="Gloux S."/>
            <person name="Godrie T."/>
            <person name="Goffeau A."/>
            <person name="Kahn D."/>
            <person name="Kiss E."/>
            <person name="Lelaure V."/>
            <person name="Masuy D."/>
            <person name="Pohl T."/>
            <person name="Portetelle D."/>
            <person name="Puehler A."/>
            <person name="Purnelle B."/>
            <person name="Ramsperger U."/>
            <person name="Renard C."/>
            <person name="Thebault P."/>
            <person name="Vandenbol M."/>
            <person name="Weidner S."/>
            <person name="Galibert F."/>
        </authorList>
    </citation>
    <scope>NUCLEOTIDE SEQUENCE [LARGE SCALE GENOMIC DNA]</scope>
    <source>
        <strain>1021</strain>
    </source>
</reference>
<reference key="2">
    <citation type="journal article" date="2001" name="Science">
        <title>The composite genome of the legume symbiont Sinorhizobium meliloti.</title>
        <authorList>
            <person name="Galibert F."/>
            <person name="Finan T.M."/>
            <person name="Long S.R."/>
            <person name="Puehler A."/>
            <person name="Abola P."/>
            <person name="Ampe F."/>
            <person name="Barloy-Hubler F."/>
            <person name="Barnett M.J."/>
            <person name="Becker A."/>
            <person name="Boistard P."/>
            <person name="Bothe G."/>
            <person name="Boutry M."/>
            <person name="Bowser L."/>
            <person name="Buhrmester J."/>
            <person name="Cadieu E."/>
            <person name="Capela D."/>
            <person name="Chain P."/>
            <person name="Cowie A."/>
            <person name="Davis R.W."/>
            <person name="Dreano S."/>
            <person name="Federspiel N.A."/>
            <person name="Fisher R.F."/>
            <person name="Gloux S."/>
            <person name="Godrie T."/>
            <person name="Goffeau A."/>
            <person name="Golding B."/>
            <person name="Gouzy J."/>
            <person name="Gurjal M."/>
            <person name="Hernandez-Lucas I."/>
            <person name="Hong A."/>
            <person name="Huizar L."/>
            <person name="Hyman R.W."/>
            <person name="Jones T."/>
            <person name="Kahn D."/>
            <person name="Kahn M.L."/>
            <person name="Kalman S."/>
            <person name="Keating D.H."/>
            <person name="Kiss E."/>
            <person name="Komp C."/>
            <person name="Lelaure V."/>
            <person name="Masuy D."/>
            <person name="Palm C."/>
            <person name="Peck M.C."/>
            <person name="Pohl T.M."/>
            <person name="Portetelle D."/>
            <person name="Purnelle B."/>
            <person name="Ramsperger U."/>
            <person name="Surzycki R."/>
            <person name="Thebault P."/>
            <person name="Vandenbol M."/>
            <person name="Vorhoelter F.J."/>
            <person name="Weidner S."/>
            <person name="Wells D.H."/>
            <person name="Wong K."/>
            <person name="Yeh K.-C."/>
            <person name="Batut J."/>
        </authorList>
    </citation>
    <scope>NUCLEOTIDE SEQUENCE [LARGE SCALE GENOMIC DNA]</scope>
    <source>
        <strain>1021</strain>
    </source>
</reference>
<feature type="chain" id="PRO_0000114555" description="Alanine racemase">
    <location>
        <begin position="1"/>
        <end position="379"/>
    </location>
</feature>
<feature type="active site" description="Proton acceptor; specific for D-alanine" evidence="1">
    <location>
        <position position="41"/>
    </location>
</feature>
<feature type="active site" description="Proton acceptor; specific for L-alanine" evidence="1">
    <location>
        <position position="260"/>
    </location>
</feature>
<feature type="binding site" evidence="1">
    <location>
        <position position="138"/>
    </location>
    <ligand>
        <name>substrate</name>
    </ligand>
</feature>
<feature type="binding site" evidence="1">
    <location>
        <position position="319"/>
    </location>
    <ligand>
        <name>substrate</name>
    </ligand>
</feature>
<feature type="modified residue" description="N6-(pyridoxal phosphate)lysine" evidence="1">
    <location>
        <position position="41"/>
    </location>
</feature>
<gene>
    <name type="primary">alr</name>
    <name type="ordered locus">R01127</name>
    <name type="ORF">SMc00557</name>
</gene>
<dbReference type="EC" id="5.1.1.1" evidence="1"/>
<dbReference type="EMBL" id="AL591688">
    <property type="protein sequence ID" value="CAC45706.1"/>
    <property type="molecule type" value="Genomic_DNA"/>
</dbReference>
<dbReference type="RefSeq" id="NP_385233.1">
    <property type="nucleotide sequence ID" value="NC_003047.1"/>
</dbReference>
<dbReference type="RefSeq" id="WP_010969059.1">
    <property type="nucleotide sequence ID" value="NC_003047.1"/>
</dbReference>
<dbReference type="SMR" id="Q92R07"/>
<dbReference type="EnsemblBacteria" id="CAC45706">
    <property type="protein sequence ID" value="CAC45706"/>
    <property type="gene ID" value="SMc00557"/>
</dbReference>
<dbReference type="KEGG" id="sme:SMc00557"/>
<dbReference type="PATRIC" id="fig|266834.11.peg.2536"/>
<dbReference type="eggNOG" id="COG0787">
    <property type="taxonomic scope" value="Bacteria"/>
</dbReference>
<dbReference type="HOGENOM" id="CLU_028393_1_1_5"/>
<dbReference type="OrthoDB" id="9813814at2"/>
<dbReference type="UniPathway" id="UPA00042">
    <property type="reaction ID" value="UER00497"/>
</dbReference>
<dbReference type="Proteomes" id="UP000001976">
    <property type="component" value="Chromosome"/>
</dbReference>
<dbReference type="GO" id="GO:0005829">
    <property type="term" value="C:cytosol"/>
    <property type="evidence" value="ECO:0007669"/>
    <property type="project" value="TreeGrafter"/>
</dbReference>
<dbReference type="GO" id="GO:0008784">
    <property type="term" value="F:alanine racemase activity"/>
    <property type="evidence" value="ECO:0007669"/>
    <property type="project" value="UniProtKB-UniRule"/>
</dbReference>
<dbReference type="GO" id="GO:0030170">
    <property type="term" value="F:pyridoxal phosphate binding"/>
    <property type="evidence" value="ECO:0007669"/>
    <property type="project" value="UniProtKB-UniRule"/>
</dbReference>
<dbReference type="GO" id="GO:0030632">
    <property type="term" value="P:D-alanine biosynthetic process"/>
    <property type="evidence" value="ECO:0007669"/>
    <property type="project" value="UniProtKB-UniRule"/>
</dbReference>
<dbReference type="CDD" id="cd00430">
    <property type="entry name" value="PLPDE_III_AR"/>
    <property type="match status" value="1"/>
</dbReference>
<dbReference type="Gene3D" id="3.20.20.10">
    <property type="entry name" value="Alanine racemase"/>
    <property type="match status" value="1"/>
</dbReference>
<dbReference type="Gene3D" id="2.40.37.10">
    <property type="entry name" value="Lyase, Ornithine Decarboxylase, Chain A, domain 1"/>
    <property type="match status" value="1"/>
</dbReference>
<dbReference type="HAMAP" id="MF_01201">
    <property type="entry name" value="Ala_racemase"/>
    <property type="match status" value="1"/>
</dbReference>
<dbReference type="InterPro" id="IPR000821">
    <property type="entry name" value="Ala_racemase"/>
</dbReference>
<dbReference type="InterPro" id="IPR009006">
    <property type="entry name" value="Ala_racemase/Decarboxylase_C"/>
</dbReference>
<dbReference type="InterPro" id="IPR011079">
    <property type="entry name" value="Ala_racemase_C"/>
</dbReference>
<dbReference type="InterPro" id="IPR001608">
    <property type="entry name" value="Ala_racemase_N"/>
</dbReference>
<dbReference type="InterPro" id="IPR020622">
    <property type="entry name" value="Ala_racemase_pyridoxalP-BS"/>
</dbReference>
<dbReference type="InterPro" id="IPR029066">
    <property type="entry name" value="PLP-binding_barrel"/>
</dbReference>
<dbReference type="NCBIfam" id="TIGR00492">
    <property type="entry name" value="alr"/>
    <property type="match status" value="1"/>
</dbReference>
<dbReference type="PANTHER" id="PTHR30511">
    <property type="entry name" value="ALANINE RACEMASE"/>
    <property type="match status" value="1"/>
</dbReference>
<dbReference type="PANTHER" id="PTHR30511:SF0">
    <property type="entry name" value="ALANINE RACEMASE, CATABOLIC-RELATED"/>
    <property type="match status" value="1"/>
</dbReference>
<dbReference type="Pfam" id="PF00842">
    <property type="entry name" value="Ala_racemase_C"/>
    <property type="match status" value="1"/>
</dbReference>
<dbReference type="Pfam" id="PF01168">
    <property type="entry name" value="Ala_racemase_N"/>
    <property type="match status" value="1"/>
</dbReference>
<dbReference type="PRINTS" id="PR00992">
    <property type="entry name" value="ALARACEMASE"/>
</dbReference>
<dbReference type="SMART" id="SM01005">
    <property type="entry name" value="Ala_racemase_C"/>
    <property type="match status" value="1"/>
</dbReference>
<dbReference type="SUPFAM" id="SSF50621">
    <property type="entry name" value="Alanine racemase C-terminal domain-like"/>
    <property type="match status" value="1"/>
</dbReference>
<dbReference type="SUPFAM" id="SSF51419">
    <property type="entry name" value="PLP-binding barrel"/>
    <property type="match status" value="1"/>
</dbReference>
<dbReference type="PROSITE" id="PS00395">
    <property type="entry name" value="ALANINE_RACEMASE"/>
    <property type="match status" value="1"/>
</dbReference>